<organism>
    <name type="scientific">Arabidopsis thaliana</name>
    <name type="common">Mouse-ear cress</name>
    <dbReference type="NCBI Taxonomy" id="3702"/>
    <lineage>
        <taxon>Eukaryota</taxon>
        <taxon>Viridiplantae</taxon>
        <taxon>Streptophyta</taxon>
        <taxon>Embryophyta</taxon>
        <taxon>Tracheophyta</taxon>
        <taxon>Spermatophyta</taxon>
        <taxon>Magnoliopsida</taxon>
        <taxon>eudicotyledons</taxon>
        <taxon>Gunneridae</taxon>
        <taxon>Pentapetalae</taxon>
        <taxon>rosids</taxon>
        <taxon>malvids</taxon>
        <taxon>Brassicales</taxon>
        <taxon>Brassicaceae</taxon>
        <taxon>Camelineae</taxon>
        <taxon>Arabidopsis</taxon>
    </lineage>
</organism>
<comment type="function">
    <text evidence="4">Probable transcription factor that may function in the maintenance of the proper function of the central cell in pollen tube attraction.</text>
</comment>
<comment type="subunit">
    <text evidence="2">Interacts with MEE14/CBP1.</text>
</comment>
<comment type="subcellular location">
    <subcellularLocation>
        <location evidence="1">Nucleus</location>
    </subcellularLocation>
</comment>
<protein>
    <recommendedName>
        <fullName evidence="3">Agamous-like MADS-box protein AGL103</fullName>
    </recommendedName>
</protein>
<sequence>MASSSSSSLSFSTSKKNKTFFKKPNSAFSSSRATSLIKRQQTVFKKAKELSILCDIDVCVICYGSNGELKTWPEEREKVKAIARRYGELSETKRRKGSVDLHEFLEKMNKDDPEKEEKKKIKVRRVPKVKYPVWDPRFDNYSVEQLMGLVQSLERNLTRIQHRTCAVVEAQGQRRVQYTNMANQELMMANTMNQLQQHSNQVSMYLWNHGNGAFSQIPVSALASNQTQSLAPIPPELMIYPNSDAGNYSGSLGVQGTGINGLQNMNMLTYNNINSVNDFSKQFDQNSRAESYSSLLGVHEDGNNEFENPNMSSRNNFNVQDCAGLLGMQGAGTNGLQSMNMHDYSNNNSINSNGLSHQYVQFPTYNSQHQDRVFNLDQNGNNTRSL</sequence>
<accession>Q9LSB2</accession>
<proteinExistence type="evidence at protein level"/>
<name>AG103_ARATH</name>
<dbReference type="EMBL" id="AB026654">
    <property type="protein sequence ID" value="BAB01791.1"/>
    <property type="molecule type" value="Genomic_DNA"/>
</dbReference>
<dbReference type="EMBL" id="CP002686">
    <property type="protein sequence ID" value="AEE76126.1"/>
    <property type="molecule type" value="Genomic_DNA"/>
</dbReference>
<dbReference type="EMBL" id="BT029549">
    <property type="protein sequence ID" value="ABL66805.1"/>
    <property type="molecule type" value="mRNA"/>
</dbReference>
<dbReference type="RefSeq" id="NP_188495.1">
    <property type="nucleotide sequence ID" value="NM_112751.1"/>
</dbReference>
<dbReference type="SMR" id="Q9LSB2"/>
<dbReference type="FunCoup" id="Q9LSB2">
    <property type="interactions" value="65"/>
</dbReference>
<dbReference type="IntAct" id="Q9LSB2">
    <property type="interactions" value="20"/>
</dbReference>
<dbReference type="STRING" id="3702.Q9LSB2"/>
<dbReference type="iPTMnet" id="Q9LSB2"/>
<dbReference type="PaxDb" id="3702-AT3G18650.1"/>
<dbReference type="EnsemblPlants" id="AT3G18650.1">
    <property type="protein sequence ID" value="AT3G18650.1"/>
    <property type="gene ID" value="AT3G18650"/>
</dbReference>
<dbReference type="GeneID" id="821396"/>
<dbReference type="Gramene" id="AT3G18650.1">
    <property type="protein sequence ID" value="AT3G18650.1"/>
    <property type="gene ID" value="AT3G18650"/>
</dbReference>
<dbReference type="KEGG" id="ath:AT3G18650"/>
<dbReference type="Araport" id="AT3G18650"/>
<dbReference type="TAIR" id="AT3G18650">
    <property type="gene designation" value="AGL103"/>
</dbReference>
<dbReference type="eggNOG" id="KOG0014">
    <property type="taxonomic scope" value="Eukaryota"/>
</dbReference>
<dbReference type="HOGENOM" id="CLU_764155_0_0_1"/>
<dbReference type="InParanoid" id="Q9LSB2"/>
<dbReference type="OMA" id="MNMLTYN"/>
<dbReference type="PhylomeDB" id="Q9LSB2"/>
<dbReference type="PRO" id="PR:Q9LSB2"/>
<dbReference type="Proteomes" id="UP000006548">
    <property type="component" value="Chromosome 3"/>
</dbReference>
<dbReference type="ExpressionAtlas" id="Q9LSB2">
    <property type="expression patterns" value="differential"/>
</dbReference>
<dbReference type="GO" id="GO:0005634">
    <property type="term" value="C:nucleus"/>
    <property type="evidence" value="ECO:0007669"/>
    <property type="project" value="UniProtKB-SubCell"/>
</dbReference>
<dbReference type="GO" id="GO:0000987">
    <property type="term" value="F:cis-regulatory region sequence-specific DNA binding"/>
    <property type="evidence" value="ECO:0007669"/>
    <property type="project" value="InterPro"/>
</dbReference>
<dbReference type="GO" id="GO:0003700">
    <property type="term" value="F:DNA-binding transcription factor activity"/>
    <property type="evidence" value="ECO:0000250"/>
    <property type="project" value="TAIR"/>
</dbReference>
<dbReference type="GO" id="GO:0000981">
    <property type="term" value="F:DNA-binding transcription factor activity, RNA polymerase II-specific"/>
    <property type="evidence" value="ECO:0007669"/>
    <property type="project" value="InterPro"/>
</dbReference>
<dbReference type="GO" id="GO:0046983">
    <property type="term" value="F:protein dimerization activity"/>
    <property type="evidence" value="ECO:0007669"/>
    <property type="project" value="InterPro"/>
</dbReference>
<dbReference type="GO" id="GO:0045944">
    <property type="term" value="P:positive regulation of transcription by RNA polymerase II"/>
    <property type="evidence" value="ECO:0007669"/>
    <property type="project" value="InterPro"/>
</dbReference>
<dbReference type="CDD" id="cd00266">
    <property type="entry name" value="MADS_SRF_like"/>
    <property type="match status" value="1"/>
</dbReference>
<dbReference type="FunFam" id="3.40.1810.10:FF:000025">
    <property type="entry name" value="AGAMOUS-like 76"/>
    <property type="match status" value="1"/>
</dbReference>
<dbReference type="Gene3D" id="3.40.1810.10">
    <property type="entry name" value="Transcription factor, MADS-box"/>
    <property type="match status" value="1"/>
</dbReference>
<dbReference type="InterPro" id="IPR050142">
    <property type="entry name" value="MADS-box/MEF2_TF"/>
</dbReference>
<dbReference type="InterPro" id="IPR033897">
    <property type="entry name" value="SRF-like_MADS-box"/>
</dbReference>
<dbReference type="InterPro" id="IPR002100">
    <property type="entry name" value="TF_MADSbox"/>
</dbReference>
<dbReference type="InterPro" id="IPR036879">
    <property type="entry name" value="TF_MADSbox_sf"/>
</dbReference>
<dbReference type="PANTHER" id="PTHR48019">
    <property type="entry name" value="SERUM RESPONSE FACTOR HOMOLOG"/>
    <property type="match status" value="1"/>
</dbReference>
<dbReference type="Pfam" id="PF00319">
    <property type="entry name" value="SRF-TF"/>
    <property type="match status" value="1"/>
</dbReference>
<dbReference type="PRINTS" id="PR00404">
    <property type="entry name" value="MADSDOMAIN"/>
</dbReference>
<dbReference type="SMART" id="SM00432">
    <property type="entry name" value="MADS"/>
    <property type="match status" value="1"/>
</dbReference>
<dbReference type="SUPFAM" id="SSF55455">
    <property type="entry name" value="SRF-like"/>
    <property type="match status" value="1"/>
</dbReference>
<dbReference type="PROSITE" id="PS50066">
    <property type="entry name" value="MADS_BOX_2"/>
    <property type="match status" value="1"/>
</dbReference>
<evidence type="ECO:0000255" key="1">
    <source>
        <dbReference type="PROSITE-ProRule" id="PRU00251"/>
    </source>
</evidence>
<evidence type="ECO:0000269" key="2">
    <source>
    </source>
</evidence>
<evidence type="ECO:0000305" key="3"/>
<evidence type="ECO:0000305" key="4">
    <source>
    </source>
</evidence>
<evidence type="ECO:0000312" key="5">
    <source>
        <dbReference type="Araport" id="AT3G18650"/>
    </source>
</evidence>
<gene>
    <name evidence="3" type="primary">AGL103</name>
    <name evidence="5" type="ordered locus">At3g18650</name>
</gene>
<feature type="chain" id="PRO_0000435417" description="Agamous-like MADS-box protein AGL103">
    <location>
        <begin position="1"/>
        <end position="386"/>
    </location>
</feature>
<feature type="domain" description="MADS-box" evidence="1">
    <location>
        <begin position="29"/>
        <end position="76"/>
    </location>
</feature>
<reference key="1">
    <citation type="journal article" date="2000" name="DNA Res.">
        <title>Structural analysis of Arabidopsis thaliana chromosome 3. I. Sequence features of the regions of 4,504,864 bp covered by sixty P1 and TAC clones.</title>
        <authorList>
            <person name="Sato S."/>
            <person name="Nakamura Y."/>
            <person name="Kaneko T."/>
            <person name="Katoh T."/>
            <person name="Asamizu E."/>
            <person name="Tabata S."/>
        </authorList>
    </citation>
    <scope>NUCLEOTIDE SEQUENCE [LARGE SCALE GENOMIC DNA]</scope>
    <source>
        <strain>cv. Columbia</strain>
    </source>
</reference>
<reference key="2">
    <citation type="journal article" date="2017" name="Plant J.">
        <title>Araport11: a complete reannotation of the Arabidopsis thaliana reference genome.</title>
        <authorList>
            <person name="Cheng C.Y."/>
            <person name="Krishnakumar V."/>
            <person name="Chan A.P."/>
            <person name="Thibaud-Nissen F."/>
            <person name="Schobel S."/>
            <person name="Town C.D."/>
        </authorList>
    </citation>
    <scope>GENOME REANNOTATION</scope>
    <source>
        <strain>cv. Columbia</strain>
    </source>
</reference>
<reference key="3">
    <citation type="submission" date="2006-12" db="EMBL/GenBank/DDBJ databases">
        <title>Arabidopsis ORF clones.</title>
        <authorList>
            <person name="Bautista V.R."/>
            <person name="Kim C.J."/>
            <person name="Chen H."/>
            <person name="Quinitio C."/>
            <person name="Ecker J.R."/>
        </authorList>
    </citation>
    <scope>NUCLEOTIDE SEQUENCE [LARGE SCALE MRNA]</scope>
    <source>
        <strain>cv. Columbia</strain>
    </source>
</reference>
<reference key="4">
    <citation type="journal article" date="2015" name="Plant Cell">
        <title>Arabidopsis CBP1 is a novel regulator of transcription initiation in central cell-mediated pollen tube guidance.</title>
        <authorList>
            <person name="Li H.J."/>
            <person name="Zhu S.S."/>
            <person name="Zhang M.X."/>
            <person name="Wang T."/>
            <person name="Liang L."/>
            <person name="Xue Y."/>
            <person name="Shi D.Q."/>
            <person name="Liu J."/>
            <person name="Yang W.C."/>
        </authorList>
    </citation>
    <scope>FUNCTION</scope>
    <scope>INTERACTION WITH ME14/CBP1</scope>
</reference>
<keyword id="KW-0238">DNA-binding</keyword>
<keyword id="KW-0539">Nucleus</keyword>
<keyword id="KW-1185">Reference proteome</keyword>
<keyword id="KW-0804">Transcription</keyword>
<keyword id="KW-0805">Transcription regulation</keyword>